<gene>
    <name evidence="1" type="primary">aspS</name>
    <name type="ordered locus">Bcep1808_2831</name>
</gene>
<sequence>MSMRTEYCGLVTEHLLGQTVSLCGWVQRRRDHGGVIFIDLRDREGLVQVVCDPDRGEMFATAEGVRNEFCVQIKGLVRNRPEGTVNAGLKSGKIEVLCHELIVLNASVTPPFQLDDDNLSETTRLTHRVLDLRRPQMQHNLRLRYRVAIEARKYLDEQGFIDIETPMLTKSTPEGARDYLVPSRVNAGQFFALPQSPQLFKQLLMVANFDRYYQITKCFRDEDLRADRQPEFTQIDCETSFLGEQEIRDLFEDMIRHIFKTTIDVELDAKFPVMPYSEAMARFGSDKPDLRVKLEFTELTDAMKDVDFKVFSTPANAKDGRVAALRVPKGGELSRGDIDGYTEFVRIYGAKGLAWIKVNEKAKGRDGLQSPIVKNLHDASIAAILERTGAEDGDIIFFAADRAKVVNDSLGALRLKIGHSEFGKANGLVEAGWKPLWVVDFPMFEYDDEDARYVAAHHPFTSPKDEHLEYLETDPGRCLAKAYDMVLNGWEIGGGSVRIHREEVQSKVFRALKIGAEEAQAKFGFLLDALQYGAPPHGGIAFGLDRIVTMMAGADSIRDVIAFPKTQRAQDLLTQAPSPVDERQLRELHIRLRQPEQPKA</sequence>
<dbReference type="EC" id="6.1.1.23" evidence="1"/>
<dbReference type="EMBL" id="CP000614">
    <property type="protein sequence ID" value="ABO55822.1"/>
    <property type="molecule type" value="Genomic_DNA"/>
</dbReference>
<dbReference type="SMR" id="A4JHR9"/>
<dbReference type="KEGG" id="bvi:Bcep1808_2831"/>
<dbReference type="eggNOG" id="COG0173">
    <property type="taxonomic scope" value="Bacteria"/>
</dbReference>
<dbReference type="HOGENOM" id="CLU_014330_3_2_4"/>
<dbReference type="Proteomes" id="UP000002287">
    <property type="component" value="Chromosome 1"/>
</dbReference>
<dbReference type="GO" id="GO:0005737">
    <property type="term" value="C:cytoplasm"/>
    <property type="evidence" value="ECO:0007669"/>
    <property type="project" value="UniProtKB-SubCell"/>
</dbReference>
<dbReference type="GO" id="GO:0004815">
    <property type="term" value="F:aspartate-tRNA ligase activity"/>
    <property type="evidence" value="ECO:0007669"/>
    <property type="project" value="UniProtKB-UniRule"/>
</dbReference>
<dbReference type="GO" id="GO:0050560">
    <property type="term" value="F:aspartate-tRNA(Asn) ligase activity"/>
    <property type="evidence" value="ECO:0007669"/>
    <property type="project" value="UniProtKB-EC"/>
</dbReference>
<dbReference type="GO" id="GO:0005524">
    <property type="term" value="F:ATP binding"/>
    <property type="evidence" value="ECO:0007669"/>
    <property type="project" value="UniProtKB-UniRule"/>
</dbReference>
<dbReference type="GO" id="GO:0003676">
    <property type="term" value="F:nucleic acid binding"/>
    <property type="evidence" value="ECO:0007669"/>
    <property type="project" value="InterPro"/>
</dbReference>
<dbReference type="GO" id="GO:0006422">
    <property type="term" value="P:aspartyl-tRNA aminoacylation"/>
    <property type="evidence" value="ECO:0007669"/>
    <property type="project" value="UniProtKB-UniRule"/>
</dbReference>
<dbReference type="CDD" id="cd00777">
    <property type="entry name" value="AspRS_core"/>
    <property type="match status" value="1"/>
</dbReference>
<dbReference type="CDD" id="cd04317">
    <property type="entry name" value="EcAspRS_like_N"/>
    <property type="match status" value="1"/>
</dbReference>
<dbReference type="Gene3D" id="3.30.930.10">
    <property type="entry name" value="Bira Bifunctional Protein, Domain 2"/>
    <property type="match status" value="1"/>
</dbReference>
<dbReference type="Gene3D" id="3.30.1360.30">
    <property type="entry name" value="GAD-like domain"/>
    <property type="match status" value="1"/>
</dbReference>
<dbReference type="Gene3D" id="2.40.50.140">
    <property type="entry name" value="Nucleic acid-binding proteins"/>
    <property type="match status" value="1"/>
</dbReference>
<dbReference type="HAMAP" id="MF_00044">
    <property type="entry name" value="Asp_tRNA_synth_type1"/>
    <property type="match status" value="1"/>
</dbReference>
<dbReference type="InterPro" id="IPR004364">
    <property type="entry name" value="Aa-tRNA-synt_II"/>
</dbReference>
<dbReference type="InterPro" id="IPR006195">
    <property type="entry name" value="aa-tRNA-synth_II"/>
</dbReference>
<dbReference type="InterPro" id="IPR045864">
    <property type="entry name" value="aa-tRNA-synth_II/BPL/LPL"/>
</dbReference>
<dbReference type="InterPro" id="IPR004524">
    <property type="entry name" value="Asp-tRNA-ligase_1"/>
</dbReference>
<dbReference type="InterPro" id="IPR047089">
    <property type="entry name" value="Asp-tRNA-ligase_1_N"/>
</dbReference>
<dbReference type="InterPro" id="IPR002312">
    <property type="entry name" value="Asp/Asn-tRNA-synth_IIb"/>
</dbReference>
<dbReference type="InterPro" id="IPR047090">
    <property type="entry name" value="AspRS_core"/>
</dbReference>
<dbReference type="InterPro" id="IPR004115">
    <property type="entry name" value="GAD-like_sf"/>
</dbReference>
<dbReference type="InterPro" id="IPR029351">
    <property type="entry name" value="GAD_dom"/>
</dbReference>
<dbReference type="InterPro" id="IPR012340">
    <property type="entry name" value="NA-bd_OB-fold"/>
</dbReference>
<dbReference type="InterPro" id="IPR004365">
    <property type="entry name" value="NA-bd_OB_tRNA"/>
</dbReference>
<dbReference type="NCBIfam" id="TIGR00459">
    <property type="entry name" value="aspS_bact"/>
    <property type="match status" value="1"/>
</dbReference>
<dbReference type="NCBIfam" id="NF001750">
    <property type="entry name" value="PRK00476.1"/>
    <property type="match status" value="1"/>
</dbReference>
<dbReference type="PANTHER" id="PTHR22594:SF5">
    <property type="entry name" value="ASPARTATE--TRNA LIGASE, MITOCHONDRIAL"/>
    <property type="match status" value="1"/>
</dbReference>
<dbReference type="PANTHER" id="PTHR22594">
    <property type="entry name" value="ASPARTYL/LYSYL-TRNA SYNTHETASE"/>
    <property type="match status" value="1"/>
</dbReference>
<dbReference type="Pfam" id="PF02938">
    <property type="entry name" value="GAD"/>
    <property type="match status" value="1"/>
</dbReference>
<dbReference type="Pfam" id="PF00152">
    <property type="entry name" value="tRNA-synt_2"/>
    <property type="match status" value="1"/>
</dbReference>
<dbReference type="Pfam" id="PF01336">
    <property type="entry name" value="tRNA_anti-codon"/>
    <property type="match status" value="1"/>
</dbReference>
<dbReference type="PRINTS" id="PR01042">
    <property type="entry name" value="TRNASYNTHASP"/>
</dbReference>
<dbReference type="SUPFAM" id="SSF55681">
    <property type="entry name" value="Class II aaRS and biotin synthetases"/>
    <property type="match status" value="1"/>
</dbReference>
<dbReference type="SUPFAM" id="SSF55261">
    <property type="entry name" value="GAD domain-like"/>
    <property type="match status" value="1"/>
</dbReference>
<dbReference type="SUPFAM" id="SSF50249">
    <property type="entry name" value="Nucleic acid-binding proteins"/>
    <property type="match status" value="1"/>
</dbReference>
<dbReference type="PROSITE" id="PS50862">
    <property type="entry name" value="AA_TRNA_LIGASE_II"/>
    <property type="match status" value="1"/>
</dbReference>
<comment type="function">
    <text evidence="1">Aspartyl-tRNA synthetase with relaxed tRNA specificity since it is able to aspartylate not only its cognate tRNA(Asp) but also tRNA(Asn). Reaction proceeds in two steps: L-aspartate is first activated by ATP to form Asp-AMP and then transferred to the acceptor end of tRNA(Asp/Asn).</text>
</comment>
<comment type="catalytic activity">
    <reaction evidence="1">
        <text>tRNA(Asx) + L-aspartate + ATP = L-aspartyl-tRNA(Asx) + AMP + diphosphate</text>
        <dbReference type="Rhea" id="RHEA:18349"/>
        <dbReference type="Rhea" id="RHEA-COMP:9710"/>
        <dbReference type="Rhea" id="RHEA-COMP:9711"/>
        <dbReference type="ChEBI" id="CHEBI:29991"/>
        <dbReference type="ChEBI" id="CHEBI:30616"/>
        <dbReference type="ChEBI" id="CHEBI:33019"/>
        <dbReference type="ChEBI" id="CHEBI:78442"/>
        <dbReference type="ChEBI" id="CHEBI:78516"/>
        <dbReference type="ChEBI" id="CHEBI:456215"/>
        <dbReference type="EC" id="6.1.1.23"/>
    </reaction>
</comment>
<comment type="subunit">
    <text evidence="1">Homodimer.</text>
</comment>
<comment type="subcellular location">
    <subcellularLocation>
        <location evidence="1">Cytoplasm</location>
    </subcellularLocation>
</comment>
<comment type="similarity">
    <text evidence="1">Belongs to the class-II aminoacyl-tRNA synthetase family. Type 1 subfamily.</text>
</comment>
<protein>
    <recommendedName>
        <fullName evidence="1">Aspartate--tRNA(Asp/Asn) ligase</fullName>
        <ecNumber evidence="1">6.1.1.23</ecNumber>
    </recommendedName>
    <alternativeName>
        <fullName evidence="1">Aspartyl-tRNA synthetase</fullName>
        <shortName evidence="1">AspRS</shortName>
    </alternativeName>
    <alternativeName>
        <fullName evidence="1">Non-discriminating aspartyl-tRNA synthetase</fullName>
        <shortName evidence="1">ND-AspRS</shortName>
    </alternativeName>
</protein>
<reference key="1">
    <citation type="submission" date="2007-03" db="EMBL/GenBank/DDBJ databases">
        <title>Complete sequence of chromosome 1 of Burkholderia vietnamiensis G4.</title>
        <authorList>
            <consortium name="US DOE Joint Genome Institute"/>
            <person name="Copeland A."/>
            <person name="Lucas S."/>
            <person name="Lapidus A."/>
            <person name="Barry K."/>
            <person name="Detter J.C."/>
            <person name="Glavina del Rio T."/>
            <person name="Hammon N."/>
            <person name="Israni S."/>
            <person name="Dalin E."/>
            <person name="Tice H."/>
            <person name="Pitluck S."/>
            <person name="Chain P."/>
            <person name="Malfatti S."/>
            <person name="Shin M."/>
            <person name="Vergez L."/>
            <person name="Schmutz J."/>
            <person name="Larimer F."/>
            <person name="Land M."/>
            <person name="Hauser L."/>
            <person name="Kyrpides N."/>
            <person name="Tiedje J."/>
            <person name="Richardson P."/>
        </authorList>
    </citation>
    <scope>NUCLEOTIDE SEQUENCE [LARGE SCALE GENOMIC DNA]</scope>
    <source>
        <strain>G4 / LMG 22486</strain>
    </source>
</reference>
<accession>A4JHR9</accession>
<proteinExistence type="inferred from homology"/>
<keyword id="KW-0030">Aminoacyl-tRNA synthetase</keyword>
<keyword id="KW-0067">ATP-binding</keyword>
<keyword id="KW-0963">Cytoplasm</keyword>
<keyword id="KW-0436">Ligase</keyword>
<keyword id="KW-0547">Nucleotide-binding</keyword>
<keyword id="KW-0648">Protein biosynthesis</keyword>
<name>SYDND_BURVG</name>
<evidence type="ECO:0000255" key="1">
    <source>
        <dbReference type="HAMAP-Rule" id="MF_00044"/>
    </source>
</evidence>
<feature type="chain" id="PRO_1000006652" description="Aspartate--tRNA(Asp/Asn) ligase">
    <location>
        <begin position="1"/>
        <end position="600"/>
    </location>
</feature>
<feature type="region of interest" description="Aspartate" evidence="1">
    <location>
        <begin position="198"/>
        <end position="201"/>
    </location>
</feature>
<feature type="binding site" evidence="1">
    <location>
        <position position="174"/>
    </location>
    <ligand>
        <name>L-aspartate</name>
        <dbReference type="ChEBI" id="CHEBI:29991"/>
    </ligand>
</feature>
<feature type="binding site" evidence="1">
    <location>
        <begin position="220"/>
        <end position="222"/>
    </location>
    <ligand>
        <name>ATP</name>
        <dbReference type="ChEBI" id="CHEBI:30616"/>
    </ligand>
</feature>
<feature type="binding site" evidence="1">
    <location>
        <position position="220"/>
    </location>
    <ligand>
        <name>L-aspartate</name>
        <dbReference type="ChEBI" id="CHEBI:29991"/>
    </ligand>
</feature>
<feature type="binding site" evidence="1">
    <location>
        <position position="229"/>
    </location>
    <ligand>
        <name>ATP</name>
        <dbReference type="ChEBI" id="CHEBI:30616"/>
    </ligand>
</feature>
<feature type="binding site" evidence="1">
    <location>
        <position position="457"/>
    </location>
    <ligand>
        <name>L-aspartate</name>
        <dbReference type="ChEBI" id="CHEBI:29991"/>
    </ligand>
</feature>
<feature type="binding site" evidence="1">
    <location>
        <position position="491"/>
    </location>
    <ligand>
        <name>ATP</name>
        <dbReference type="ChEBI" id="CHEBI:30616"/>
    </ligand>
</feature>
<feature type="binding site" evidence="1">
    <location>
        <position position="498"/>
    </location>
    <ligand>
        <name>L-aspartate</name>
        <dbReference type="ChEBI" id="CHEBI:29991"/>
    </ligand>
</feature>
<feature type="binding site" evidence="1">
    <location>
        <begin position="543"/>
        <end position="546"/>
    </location>
    <ligand>
        <name>ATP</name>
        <dbReference type="ChEBI" id="CHEBI:30616"/>
    </ligand>
</feature>
<feature type="site" description="Important for tRNA non-discrimination" evidence="1">
    <location>
        <position position="32"/>
    </location>
</feature>
<feature type="site" description="Important for tRNA non-discrimination" evidence="1">
    <location>
        <position position="83"/>
    </location>
</feature>
<organism>
    <name type="scientific">Burkholderia vietnamiensis (strain G4 / LMG 22486)</name>
    <name type="common">Burkholderia cepacia (strain R1808)</name>
    <dbReference type="NCBI Taxonomy" id="269482"/>
    <lineage>
        <taxon>Bacteria</taxon>
        <taxon>Pseudomonadati</taxon>
        <taxon>Pseudomonadota</taxon>
        <taxon>Betaproteobacteria</taxon>
        <taxon>Burkholderiales</taxon>
        <taxon>Burkholderiaceae</taxon>
        <taxon>Burkholderia</taxon>
        <taxon>Burkholderia cepacia complex</taxon>
    </lineage>
</organism>